<organism>
    <name type="scientific">Syntrophomonas wolfei subsp. wolfei (strain DSM 2245B / Goettingen)</name>
    <dbReference type="NCBI Taxonomy" id="335541"/>
    <lineage>
        <taxon>Bacteria</taxon>
        <taxon>Bacillati</taxon>
        <taxon>Bacillota</taxon>
        <taxon>Clostridia</taxon>
        <taxon>Eubacteriales</taxon>
        <taxon>Syntrophomonadaceae</taxon>
        <taxon>Syntrophomonas</taxon>
    </lineage>
</organism>
<reference key="1">
    <citation type="journal article" date="2010" name="Environ. Microbiol.">
        <title>The genome of Syntrophomonas wolfei: new insights into syntrophic metabolism and biohydrogen production.</title>
        <authorList>
            <person name="Sieber J.R."/>
            <person name="Sims D.R."/>
            <person name="Han C."/>
            <person name="Kim E."/>
            <person name="Lykidis A."/>
            <person name="Lapidus A.L."/>
            <person name="McDonnald E."/>
            <person name="Rohlin L."/>
            <person name="Culley D.E."/>
            <person name="Gunsalus R."/>
            <person name="McInerney M.J."/>
        </authorList>
    </citation>
    <scope>NUCLEOTIDE SEQUENCE [LARGE SCALE GENOMIC DNA]</scope>
    <source>
        <strain>DSM 2245B / Goettingen</strain>
    </source>
</reference>
<proteinExistence type="inferred from homology"/>
<dbReference type="EMBL" id="CP000448">
    <property type="protein sequence ID" value="ABI69609.1"/>
    <property type="molecule type" value="Genomic_DNA"/>
</dbReference>
<dbReference type="RefSeq" id="WP_011641693.1">
    <property type="nucleotide sequence ID" value="NC_008346.1"/>
</dbReference>
<dbReference type="SMR" id="Q0AUJ5"/>
<dbReference type="STRING" id="335541.Swol_2318"/>
<dbReference type="KEGG" id="swo:Swol_2318"/>
<dbReference type="eggNOG" id="COG0097">
    <property type="taxonomic scope" value="Bacteria"/>
</dbReference>
<dbReference type="HOGENOM" id="CLU_065464_1_2_9"/>
<dbReference type="OrthoDB" id="9805007at2"/>
<dbReference type="Proteomes" id="UP000001968">
    <property type="component" value="Chromosome"/>
</dbReference>
<dbReference type="GO" id="GO:0022625">
    <property type="term" value="C:cytosolic large ribosomal subunit"/>
    <property type="evidence" value="ECO:0007669"/>
    <property type="project" value="TreeGrafter"/>
</dbReference>
<dbReference type="GO" id="GO:0019843">
    <property type="term" value="F:rRNA binding"/>
    <property type="evidence" value="ECO:0007669"/>
    <property type="project" value="UniProtKB-UniRule"/>
</dbReference>
<dbReference type="GO" id="GO:0003735">
    <property type="term" value="F:structural constituent of ribosome"/>
    <property type="evidence" value="ECO:0007669"/>
    <property type="project" value="InterPro"/>
</dbReference>
<dbReference type="GO" id="GO:0002181">
    <property type="term" value="P:cytoplasmic translation"/>
    <property type="evidence" value="ECO:0007669"/>
    <property type="project" value="TreeGrafter"/>
</dbReference>
<dbReference type="FunFam" id="3.90.930.12:FF:000001">
    <property type="entry name" value="50S ribosomal protein L6"/>
    <property type="match status" value="1"/>
</dbReference>
<dbReference type="FunFam" id="3.90.930.12:FF:000002">
    <property type="entry name" value="50S ribosomal protein L6"/>
    <property type="match status" value="1"/>
</dbReference>
<dbReference type="Gene3D" id="3.90.930.12">
    <property type="entry name" value="Ribosomal protein L6, alpha-beta domain"/>
    <property type="match status" value="2"/>
</dbReference>
<dbReference type="HAMAP" id="MF_01365_B">
    <property type="entry name" value="Ribosomal_uL6_B"/>
    <property type="match status" value="1"/>
</dbReference>
<dbReference type="InterPro" id="IPR000702">
    <property type="entry name" value="Ribosomal_uL6-like"/>
</dbReference>
<dbReference type="InterPro" id="IPR036789">
    <property type="entry name" value="Ribosomal_uL6-like_a/b-dom_sf"/>
</dbReference>
<dbReference type="InterPro" id="IPR020040">
    <property type="entry name" value="Ribosomal_uL6_a/b-dom"/>
</dbReference>
<dbReference type="InterPro" id="IPR019906">
    <property type="entry name" value="Ribosomal_uL6_bac-type"/>
</dbReference>
<dbReference type="InterPro" id="IPR002358">
    <property type="entry name" value="Ribosomal_uL6_CS"/>
</dbReference>
<dbReference type="NCBIfam" id="TIGR03654">
    <property type="entry name" value="L6_bact"/>
    <property type="match status" value="1"/>
</dbReference>
<dbReference type="PANTHER" id="PTHR11655">
    <property type="entry name" value="60S/50S RIBOSOMAL PROTEIN L6/L9"/>
    <property type="match status" value="1"/>
</dbReference>
<dbReference type="PANTHER" id="PTHR11655:SF14">
    <property type="entry name" value="LARGE RIBOSOMAL SUBUNIT PROTEIN UL6M"/>
    <property type="match status" value="1"/>
</dbReference>
<dbReference type="Pfam" id="PF00347">
    <property type="entry name" value="Ribosomal_L6"/>
    <property type="match status" value="2"/>
</dbReference>
<dbReference type="PIRSF" id="PIRSF002162">
    <property type="entry name" value="Ribosomal_L6"/>
    <property type="match status" value="1"/>
</dbReference>
<dbReference type="PRINTS" id="PR00059">
    <property type="entry name" value="RIBOSOMALL6"/>
</dbReference>
<dbReference type="SUPFAM" id="SSF56053">
    <property type="entry name" value="Ribosomal protein L6"/>
    <property type="match status" value="2"/>
</dbReference>
<dbReference type="PROSITE" id="PS00525">
    <property type="entry name" value="RIBOSOMAL_L6_1"/>
    <property type="match status" value="1"/>
</dbReference>
<sequence length="179" mass="19330">MSRIGKKPISLPAGVEVSIKDNAISVKGPKGVLEWALPEGITVVQEGNELVVKRPSDIKQHRAMHGLSRALIANMVQGVSAGFEKKLELVGVGYRAQMQGKKLVISIGFSHPVEVEPPEGIEFEVPAVTRITVKGIDKQLVGNTAAHIRAIRKPEPYKGKGIKYENEVIRRKAGKAGGK</sequence>
<evidence type="ECO:0000255" key="1">
    <source>
        <dbReference type="HAMAP-Rule" id="MF_01365"/>
    </source>
</evidence>
<evidence type="ECO:0000305" key="2"/>
<keyword id="KW-1185">Reference proteome</keyword>
<keyword id="KW-0687">Ribonucleoprotein</keyword>
<keyword id="KW-0689">Ribosomal protein</keyword>
<keyword id="KW-0694">RNA-binding</keyword>
<keyword id="KW-0699">rRNA-binding</keyword>
<name>RL6_SYNWW</name>
<comment type="function">
    <text evidence="1">This protein binds to the 23S rRNA, and is important in its secondary structure. It is located near the subunit interface in the base of the L7/L12 stalk, and near the tRNA binding site of the peptidyltransferase center.</text>
</comment>
<comment type="subunit">
    <text evidence="1">Part of the 50S ribosomal subunit.</text>
</comment>
<comment type="similarity">
    <text evidence="1">Belongs to the universal ribosomal protein uL6 family.</text>
</comment>
<feature type="chain" id="PRO_0000265305" description="Large ribosomal subunit protein uL6">
    <location>
        <begin position="1"/>
        <end position="179"/>
    </location>
</feature>
<gene>
    <name evidence="1" type="primary">rplF</name>
    <name type="ordered locus">Swol_2318</name>
</gene>
<protein>
    <recommendedName>
        <fullName evidence="1">Large ribosomal subunit protein uL6</fullName>
    </recommendedName>
    <alternativeName>
        <fullName evidence="2">50S ribosomal protein L6</fullName>
    </alternativeName>
</protein>
<accession>Q0AUJ5</accession>